<keyword id="KW-0053">Apoptosis</keyword>
<keyword id="KW-0067">ATP-binding</keyword>
<keyword id="KW-0963">Cytoplasm</keyword>
<keyword id="KW-0547">Nucleotide-binding</keyword>
<keyword id="KW-0539">Nucleus</keyword>
<keyword id="KW-1185">Reference proteome</keyword>
<keyword id="KW-0808">Transferase</keyword>
<keyword id="KW-0833">Ubl conjugation pathway</keyword>
<sequence>MAESPAAEAIILPGAAAGGGVLPHLSGLQAPGTSPLTTSSVWDPTASADWDNERASNQCVLRIKRDIMSIYKEPPPGMFVVPDPHDMTKIHALITGPFDTPYEGGFFLFLFRCPPDYPIHPPRVKLMTTGNNTVRFNPNFYRNGKVCLSILGTWTGPAWSPAQSLSSVLISIQSLMTENPYHNEPGFEQERHSGDSKNYNECIRHETIRVAVCEMLEGKCQCPDALRSVMEKSFMEYYDFYEAVCKDRFHLQGQNMQDPFGEKRGHFDYQSLLSRLQTIHQRVREKHRKETVDIDSDSSSSETETDTQGSSNP</sequence>
<proteinExistence type="evidence at transcript level"/>
<name>UBE2Z_XENTR</name>
<accession>Q66KB0</accession>
<feature type="chain" id="PRO_0000280520" description="Ubiquitin-conjugating enzyme E2 Z">
    <location>
        <begin position="1"/>
        <end position="313"/>
    </location>
</feature>
<feature type="domain" description="UBC core" evidence="2">
    <location>
        <begin position="58"/>
        <end position="212"/>
    </location>
</feature>
<feature type="region of interest" description="Disordered" evidence="3">
    <location>
        <begin position="283"/>
        <end position="313"/>
    </location>
</feature>
<feature type="compositionally biased region" description="Low complexity" evidence="3">
    <location>
        <begin position="297"/>
        <end position="313"/>
    </location>
</feature>
<feature type="active site" description="Glycyl thioester intermediate" evidence="2">
    <location>
        <position position="147"/>
    </location>
</feature>
<evidence type="ECO:0000250" key="1">
    <source>
        <dbReference type="UniProtKB" id="Q9H832"/>
    </source>
</evidence>
<evidence type="ECO:0000255" key="2">
    <source>
        <dbReference type="PROSITE-ProRule" id="PRU00388"/>
    </source>
</evidence>
<evidence type="ECO:0000256" key="3">
    <source>
        <dbReference type="SAM" id="MobiDB-lite"/>
    </source>
</evidence>
<evidence type="ECO:0000305" key="4"/>
<gene>
    <name type="primary">ube2z</name>
</gene>
<reference key="1">
    <citation type="submission" date="2004-08" db="EMBL/GenBank/DDBJ databases">
        <authorList>
            <consortium name="NIH - Xenopus Gene Collection (XGC) project"/>
        </authorList>
    </citation>
    <scope>NUCLEOTIDE SEQUENCE [LARGE SCALE MRNA]</scope>
    <source>
        <tissue>Embryo</tissue>
    </source>
</reference>
<protein>
    <recommendedName>
        <fullName>Ubiquitin-conjugating enzyme E2 Z</fullName>
        <ecNumber>2.3.2.23</ecNumber>
    </recommendedName>
    <alternativeName>
        <fullName>E2 ubiquitin-conjugating enzyme Z</fullName>
    </alternativeName>
    <alternativeName>
        <fullName>Ubiquitin carrier protein Z</fullName>
    </alternativeName>
    <alternativeName>
        <fullName>Ubiquitin-protein ligase Z</fullName>
    </alternativeName>
</protein>
<organism>
    <name type="scientific">Xenopus tropicalis</name>
    <name type="common">Western clawed frog</name>
    <name type="synonym">Silurana tropicalis</name>
    <dbReference type="NCBI Taxonomy" id="8364"/>
    <lineage>
        <taxon>Eukaryota</taxon>
        <taxon>Metazoa</taxon>
        <taxon>Chordata</taxon>
        <taxon>Craniata</taxon>
        <taxon>Vertebrata</taxon>
        <taxon>Euteleostomi</taxon>
        <taxon>Amphibia</taxon>
        <taxon>Batrachia</taxon>
        <taxon>Anura</taxon>
        <taxon>Pipoidea</taxon>
        <taxon>Pipidae</taxon>
        <taxon>Xenopodinae</taxon>
        <taxon>Xenopus</taxon>
        <taxon>Silurana</taxon>
    </lineage>
</organism>
<dbReference type="EC" id="2.3.2.23"/>
<dbReference type="EMBL" id="BC080480">
    <property type="protein sequence ID" value="AAH80480.1"/>
    <property type="status" value="ALT_INIT"/>
    <property type="molecule type" value="mRNA"/>
</dbReference>
<dbReference type="RefSeq" id="NP_001007969.2">
    <property type="nucleotide sequence ID" value="NM_001007968.2"/>
</dbReference>
<dbReference type="SMR" id="Q66KB0"/>
<dbReference type="FunCoup" id="Q66KB0">
    <property type="interactions" value="4720"/>
</dbReference>
<dbReference type="STRING" id="8364.ENSXETP00000050856"/>
<dbReference type="PaxDb" id="8364-ENSXETP00000049362"/>
<dbReference type="DNASU" id="493338"/>
<dbReference type="GeneID" id="493338"/>
<dbReference type="KEGG" id="xtr:493338"/>
<dbReference type="AGR" id="Xenbase:XB-GENE-990986"/>
<dbReference type="CTD" id="65264"/>
<dbReference type="Xenbase" id="XB-GENE-990986">
    <property type="gene designation" value="ube2z"/>
</dbReference>
<dbReference type="eggNOG" id="KOG0895">
    <property type="taxonomic scope" value="Eukaryota"/>
</dbReference>
<dbReference type="InParanoid" id="Q66KB0"/>
<dbReference type="OMA" id="KHQQENP"/>
<dbReference type="OrthoDB" id="47801at2759"/>
<dbReference type="Reactome" id="R-XTR-8866652">
    <property type="pathway name" value="Synthesis of active ubiquitin: roles of E1 and E2 enzymes"/>
</dbReference>
<dbReference type="Reactome" id="R-XTR-983168">
    <property type="pathway name" value="Antigen processing: Ubiquitination &amp; Proteasome degradation"/>
</dbReference>
<dbReference type="UniPathway" id="UPA00143"/>
<dbReference type="Proteomes" id="UP000008143">
    <property type="component" value="Chromosome 10"/>
</dbReference>
<dbReference type="Bgee" id="ENSXETG00000022817">
    <property type="expression patterns" value="Expressed in egg cell and 14 other cell types or tissues"/>
</dbReference>
<dbReference type="GO" id="GO:0005737">
    <property type="term" value="C:cytoplasm"/>
    <property type="evidence" value="ECO:0007669"/>
    <property type="project" value="UniProtKB-SubCell"/>
</dbReference>
<dbReference type="GO" id="GO:0005634">
    <property type="term" value="C:nucleus"/>
    <property type="evidence" value="ECO:0007669"/>
    <property type="project" value="UniProtKB-SubCell"/>
</dbReference>
<dbReference type="GO" id="GO:0005524">
    <property type="term" value="F:ATP binding"/>
    <property type="evidence" value="ECO:0007669"/>
    <property type="project" value="UniProtKB-KW"/>
</dbReference>
<dbReference type="GO" id="GO:0061631">
    <property type="term" value="F:ubiquitin conjugating enzyme activity"/>
    <property type="evidence" value="ECO:0007669"/>
    <property type="project" value="UniProtKB-EC"/>
</dbReference>
<dbReference type="GO" id="GO:0006915">
    <property type="term" value="P:apoptotic process"/>
    <property type="evidence" value="ECO:0007669"/>
    <property type="project" value="UniProtKB-KW"/>
</dbReference>
<dbReference type="GO" id="GO:0016567">
    <property type="term" value="P:protein ubiquitination"/>
    <property type="evidence" value="ECO:0007669"/>
    <property type="project" value="UniProtKB-UniPathway"/>
</dbReference>
<dbReference type="CDD" id="cd23809">
    <property type="entry name" value="UBCc_UBE2Z"/>
    <property type="match status" value="1"/>
</dbReference>
<dbReference type="FunFam" id="3.10.110.10:FF:000046">
    <property type="entry name" value="Ubiquitin-conjugating enzyme E2 Z"/>
    <property type="match status" value="1"/>
</dbReference>
<dbReference type="Gene3D" id="3.10.110.10">
    <property type="entry name" value="Ubiquitin Conjugating Enzyme"/>
    <property type="match status" value="1"/>
</dbReference>
<dbReference type="InterPro" id="IPR000608">
    <property type="entry name" value="UBQ-conjugat_E2_core"/>
</dbReference>
<dbReference type="InterPro" id="IPR016135">
    <property type="entry name" value="UBQ-conjugating_enzyme/RWD"/>
</dbReference>
<dbReference type="PANTHER" id="PTHR46116">
    <property type="entry name" value="(E3-INDEPENDENT) E2 UBIQUITIN-CONJUGATING ENZYME"/>
    <property type="match status" value="1"/>
</dbReference>
<dbReference type="PANTHER" id="PTHR46116:SF26">
    <property type="entry name" value="UBIQUITIN-CONJUGATING ENZYME E2 Z"/>
    <property type="match status" value="1"/>
</dbReference>
<dbReference type="Pfam" id="PF00179">
    <property type="entry name" value="UQ_con"/>
    <property type="match status" value="1"/>
</dbReference>
<dbReference type="SMART" id="SM00212">
    <property type="entry name" value="UBCc"/>
    <property type="match status" value="1"/>
</dbReference>
<dbReference type="SUPFAM" id="SSF54495">
    <property type="entry name" value="UBC-like"/>
    <property type="match status" value="1"/>
</dbReference>
<dbReference type="PROSITE" id="PS50127">
    <property type="entry name" value="UBC_2"/>
    <property type="match status" value="1"/>
</dbReference>
<comment type="function">
    <text evidence="2">Catalyzes the covalent attachment of ubiquitin to other proteins. May be involved in apoptosis regulation.</text>
</comment>
<comment type="catalytic activity">
    <reaction evidence="2">
        <text>S-ubiquitinyl-[E1 ubiquitin-activating enzyme]-L-cysteine + [E2 ubiquitin-conjugating enzyme]-L-cysteine = [E1 ubiquitin-activating enzyme]-L-cysteine + S-ubiquitinyl-[E2 ubiquitin-conjugating enzyme]-L-cysteine.</text>
        <dbReference type="EC" id="2.3.2.23"/>
    </reaction>
</comment>
<comment type="pathway">
    <text evidence="2">Protein modification; protein ubiquitination.</text>
</comment>
<comment type="subcellular location">
    <subcellularLocation>
        <location evidence="1">Cytoplasm</location>
    </subcellularLocation>
    <subcellularLocation>
        <location evidence="1">Nucleus</location>
    </subcellularLocation>
</comment>
<comment type="similarity">
    <text evidence="2">Belongs to the ubiquitin-conjugating enzyme family.</text>
</comment>
<comment type="sequence caution" evidence="4">
    <conflict type="erroneous initiation">
        <sequence resource="EMBL-CDS" id="AAH80480"/>
    </conflict>
</comment>